<protein>
    <recommendedName>
        <fullName evidence="1">Large ribosomal subunit protein uL10</fullName>
    </recommendedName>
    <alternativeName>
        <fullName evidence="2">50S ribosomal protein L10</fullName>
    </alternativeName>
</protein>
<sequence length="173" mass="18818">MRPEDKKKVVEDLHVRAEKAKLAILTDFRGLNVAAMSELRKGLRAASAEYQVVKNTLMTLAIEGTDLEVLKDELKGPCAVCLAYEDPVEPTKALTEFAKNNKKFEIKIGVLDGKLVNLDGLKALADLPPREVLLGQIAGTLNSLPTGLVQCLAGVPRKLLYALQAVRDQKEAA</sequence>
<reference key="1">
    <citation type="journal article" date="2012" name="Environ. Microbiol.">
        <title>The genome sequence of Desulfatibacillum alkenivorans AK-01: a blueprint for anaerobic alkane oxidation.</title>
        <authorList>
            <person name="Callaghan A.V."/>
            <person name="Morris B.E."/>
            <person name="Pereira I.A."/>
            <person name="McInerney M.J."/>
            <person name="Austin R.N."/>
            <person name="Groves J.T."/>
            <person name="Kukor J.J."/>
            <person name="Suflita J.M."/>
            <person name="Young L.Y."/>
            <person name="Zylstra G.J."/>
            <person name="Wawrik B."/>
        </authorList>
    </citation>
    <scope>NUCLEOTIDE SEQUENCE [LARGE SCALE GENOMIC DNA]</scope>
    <source>
        <strain>AK-01</strain>
    </source>
</reference>
<name>RL10_DESAL</name>
<proteinExistence type="inferred from homology"/>
<dbReference type="EMBL" id="CP001322">
    <property type="protein sequence ID" value="ACL03620.1"/>
    <property type="molecule type" value="Genomic_DNA"/>
</dbReference>
<dbReference type="RefSeq" id="WP_012611051.1">
    <property type="nucleotide sequence ID" value="NC_011768.1"/>
</dbReference>
<dbReference type="SMR" id="B8FEU3"/>
<dbReference type="KEGG" id="dal:Dalk_1923"/>
<dbReference type="eggNOG" id="COG0244">
    <property type="taxonomic scope" value="Bacteria"/>
</dbReference>
<dbReference type="HOGENOM" id="CLU_092227_2_0_7"/>
<dbReference type="Proteomes" id="UP000000739">
    <property type="component" value="Chromosome"/>
</dbReference>
<dbReference type="GO" id="GO:0015934">
    <property type="term" value="C:large ribosomal subunit"/>
    <property type="evidence" value="ECO:0007669"/>
    <property type="project" value="InterPro"/>
</dbReference>
<dbReference type="GO" id="GO:0070180">
    <property type="term" value="F:large ribosomal subunit rRNA binding"/>
    <property type="evidence" value="ECO:0007669"/>
    <property type="project" value="UniProtKB-UniRule"/>
</dbReference>
<dbReference type="GO" id="GO:0003735">
    <property type="term" value="F:structural constituent of ribosome"/>
    <property type="evidence" value="ECO:0007669"/>
    <property type="project" value="InterPro"/>
</dbReference>
<dbReference type="GO" id="GO:0006412">
    <property type="term" value="P:translation"/>
    <property type="evidence" value="ECO:0007669"/>
    <property type="project" value="UniProtKB-UniRule"/>
</dbReference>
<dbReference type="CDD" id="cd05797">
    <property type="entry name" value="Ribosomal_L10"/>
    <property type="match status" value="1"/>
</dbReference>
<dbReference type="Gene3D" id="3.30.70.1730">
    <property type="match status" value="1"/>
</dbReference>
<dbReference type="Gene3D" id="6.10.250.290">
    <property type="match status" value="1"/>
</dbReference>
<dbReference type="HAMAP" id="MF_00362">
    <property type="entry name" value="Ribosomal_uL10"/>
    <property type="match status" value="1"/>
</dbReference>
<dbReference type="InterPro" id="IPR001790">
    <property type="entry name" value="Ribosomal_uL10"/>
</dbReference>
<dbReference type="InterPro" id="IPR043141">
    <property type="entry name" value="Ribosomal_uL10-like_sf"/>
</dbReference>
<dbReference type="InterPro" id="IPR022973">
    <property type="entry name" value="Ribosomal_uL10_bac"/>
</dbReference>
<dbReference type="InterPro" id="IPR047865">
    <property type="entry name" value="Ribosomal_uL10_bac_type"/>
</dbReference>
<dbReference type="InterPro" id="IPR002363">
    <property type="entry name" value="Ribosomal_uL10_CS_bac"/>
</dbReference>
<dbReference type="NCBIfam" id="NF000955">
    <property type="entry name" value="PRK00099.1-1"/>
    <property type="match status" value="1"/>
</dbReference>
<dbReference type="PANTHER" id="PTHR11560">
    <property type="entry name" value="39S RIBOSOMAL PROTEIN L10, MITOCHONDRIAL"/>
    <property type="match status" value="1"/>
</dbReference>
<dbReference type="Pfam" id="PF00466">
    <property type="entry name" value="Ribosomal_L10"/>
    <property type="match status" value="1"/>
</dbReference>
<dbReference type="SUPFAM" id="SSF160369">
    <property type="entry name" value="Ribosomal protein L10-like"/>
    <property type="match status" value="1"/>
</dbReference>
<dbReference type="PROSITE" id="PS01109">
    <property type="entry name" value="RIBOSOMAL_L10"/>
    <property type="match status" value="1"/>
</dbReference>
<comment type="function">
    <text evidence="1">Forms part of the ribosomal stalk, playing a central role in the interaction of the ribosome with GTP-bound translation factors.</text>
</comment>
<comment type="subunit">
    <text evidence="1">Part of the ribosomal stalk of the 50S ribosomal subunit. The N-terminus interacts with L11 and the large rRNA to form the base of the stalk. The C-terminus forms an elongated spine to which L12 dimers bind in a sequential fashion forming a multimeric L10(L12)X complex.</text>
</comment>
<comment type="similarity">
    <text evidence="1">Belongs to the universal ribosomal protein uL10 family.</text>
</comment>
<feature type="chain" id="PRO_1000120948" description="Large ribosomal subunit protein uL10">
    <location>
        <begin position="1"/>
        <end position="173"/>
    </location>
</feature>
<keyword id="KW-1185">Reference proteome</keyword>
<keyword id="KW-0687">Ribonucleoprotein</keyword>
<keyword id="KW-0689">Ribosomal protein</keyword>
<keyword id="KW-0694">RNA-binding</keyword>
<keyword id="KW-0699">rRNA-binding</keyword>
<accession>B8FEU3</accession>
<evidence type="ECO:0000255" key="1">
    <source>
        <dbReference type="HAMAP-Rule" id="MF_00362"/>
    </source>
</evidence>
<evidence type="ECO:0000305" key="2"/>
<organism>
    <name type="scientific">Desulfatibacillum aliphaticivorans</name>
    <dbReference type="NCBI Taxonomy" id="218208"/>
    <lineage>
        <taxon>Bacteria</taxon>
        <taxon>Pseudomonadati</taxon>
        <taxon>Thermodesulfobacteriota</taxon>
        <taxon>Desulfobacteria</taxon>
        <taxon>Desulfobacterales</taxon>
        <taxon>Desulfatibacillaceae</taxon>
        <taxon>Desulfatibacillum</taxon>
    </lineage>
</organism>
<gene>
    <name evidence="1" type="primary">rplJ</name>
    <name type="ordered locus">Dalk_1923</name>
</gene>